<reference evidence="4 6" key="1">
    <citation type="journal article" date="2012" name="Peptides">
        <title>Novel antimicrobial peptides isolated from the skin secretions of Hainan odorous frog, Odorrana hainanensis.</title>
        <authorList>
            <person name="Wang H."/>
            <person name="Yu Z."/>
            <person name="Hu Y."/>
            <person name="Li F."/>
            <person name="Liu L."/>
            <person name="Zheng H."/>
            <person name="Meng H."/>
            <person name="Yang S."/>
            <person name="Yang X."/>
            <person name="Liu J."/>
        </authorList>
    </citation>
    <scope>NUCLEOTIDE SEQUENCE [MRNA]</scope>
    <scope>FUNCTION</scope>
    <source>
        <tissue evidence="3">Skin</tissue>
    </source>
</reference>
<organism>
    <name type="scientific">Odorrana hainanensis</name>
    <name type="common">Odor frog</name>
    <name type="synonym">Rana hainanensis</name>
    <dbReference type="NCBI Taxonomy" id="431935"/>
    <lineage>
        <taxon>Eukaryota</taxon>
        <taxon>Metazoa</taxon>
        <taxon>Chordata</taxon>
        <taxon>Craniata</taxon>
        <taxon>Vertebrata</taxon>
        <taxon>Euteleostomi</taxon>
        <taxon>Amphibia</taxon>
        <taxon>Batrachia</taxon>
        <taxon>Anura</taxon>
        <taxon>Neobatrachia</taxon>
        <taxon>Ranoidea</taxon>
        <taxon>Ranidae</taxon>
        <taxon>Odorrana</taxon>
    </lineage>
</organism>
<protein>
    <recommendedName>
        <fullName evidence="6">Brevinin-1V</fullName>
    </recommendedName>
</protein>
<evidence type="ECO:0000250" key="1">
    <source>
        <dbReference type="UniProtKB" id="P32412"/>
    </source>
</evidence>
<evidence type="ECO:0000255" key="2"/>
<evidence type="ECO:0000269" key="3">
    <source>
    </source>
</evidence>
<evidence type="ECO:0000305" key="4"/>
<evidence type="ECO:0000305" key="5">
    <source>
    </source>
</evidence>
<evidence type="ECO:0000312" key="6">
    <source>
        <dbReference type="EMBL" id="ADV36125.1"/>
    </source>
</evidence>
<proteinExistence type="inferred from homology"/>
<feature type="signal peptide" evidence="2">
    <location>
        <begin position="1"/>
        <end position="22"/>
    </location>
</feature>
<feature type="propeptide" id="PRO_0000423523" evidence="1">
    <location>
        <begin position="23"/>
        <end position="45"/>
    </location>
</feature>
<feature type="peptide" id="PRO_0000423524" description="Brevinin-1V" evidence="1">
    <location>
        <begin position="48"/>
        <end position="71"/>
    </location>
</feature>
<feature type="disulfide bond" evidence="1">
    <location>
        <begin position="65"/>
        <end position="71"/>
    </location>
</feature>
<dbReference type="EMBL" id="HQ735102">
    <property type="protein sequence ID" value="ADV36125.1"/>
    <property type="molecule type" value="mRNA"/>
</dbReference>
<dbReference type="GO" id="GO:0005576">
    <property type="term" value="C:extracellular region"/>
    <property type="evidence" value="ECO:0007669"/>
    <property type="project" value="UniProtKB-SubCell"/>
</dbReference>
<dbReference type="GO" id="GO:0050832">
    <property type="term" value="P:defense response to fungus"/>
    <property type="evidence" value="ECO:0007669"/>
    <property type="project" value="UniProtKB-KW"/>
</dbReference>
<dbReference type="GO" id="GO:0050829">
    <property type="term" value="P:defense response to Gram-negative bacterium"/>
    <property type="evidence" value="ECO:0007669"/>
    <property type="project" value="UniProtKB-ARBA"/>
</dbReference>
<dbReference type="GO" id="GO:0050830">
    <property type="term" value="P:defense response to Gram-positive bacterium"/>
    <property type="evidence" value="ECO:0007669"/>
    <property type="project" value="UniProtKB-ARBA"/>
</dbReference>
<dbReference type="GO" id="GO:0031640">
    <property type="term" value="P:killing of cells of another organism"/>
    <property type="evidence" value="ECO:0007669"/>
    <property type="project" value="UniProtKB-KW"/>
</dbReference>
<dbReference type="InterPro" id="IPR012520">
    <property type="entry name" value="Antimicrobial_frog_1"/>
</dbReference>
<dbReference type="InterPro" id="IPR004275">
    <property type="entry name" value="Frog_antimicrobial_propeptide"/>
</dbReference>
<dbReference type="Pfam" id="PF08018">
    <property type="entry name" value="Antimicrobial_1"/>
    <property type="match status" value="1"/>
</dbReference>
<dbReference type="Pfam" id="PF03032">
    <property type="entry name" value="FSAP_sig_propep"/>
    <property type="match status" value="1"/>
</dbReference>
<sequence>MFTLKKSLLLLFFLGTINLSLCEQERDADEEERRDDSEERDIEVEKRFLPLIASVAANLVPKIFCKITKKC</sequence>
<accession>E7EKC5</accession>
<name>BR1V_ODOHA</name>
<comment type="function">
    <text evidence="3">Has antimicrobial activity against Gram-positive bacteria and fungi but has weak or no activity against a range of Gram-negative bacteria except P.faecalis. Active against the Gram-positive bacteria E.faecium 091299 (MIC=37.5 uM), S.aureus ATCC 25923 (MIC=2.4 uM), S.carnosus KHS (MIC=19 uM), B.licheniformis X39 (MIC=2.4 uM) and R.rhodochrous X15 (MIC=1.2 uM) and a lower activity against E.faecalis 981 (MIC=75 uM). Active against the Gram-negative bacterium P.faecalis X29 (MIC=9.5 uM) is virtually inactive against E.coli ATCC 25922 (MIC=150 uM), and inactive against P.aeruginosa and S.typhi. Has antifungal activity against C.albicans ATCC 2002 (MIC=9.5 uM) and is also active against the slime mold 090223 (MIC=1.2 uM). Has low hemolytic activity against human erythrocytes (LC(50)=75 uM).</text>
</comment>
<comment type="subcellular location">
    <subcellularLocation>
        <location evidence="1">Secreted</location>
    </subcellularLocation>
</comment>
<comment type="tissue specificity">
    <text evidence="5">Expressed by the skin glands.</text>
</comment>
<comment type="similarity">
    <text evidence="2">Belongs to the frog skin active peptide (FSAP) family. Brevinin subfamily.</text>
</comment>
<keyword id="KW-0878">Amphibian defense peptide</keyword>
<keyword id="KW-0044">Antibiotic</keyword>
<keyword id="KW-0929">Antimicrobial</keyword>
<keyword id="KW-0165">Cleavage on pair of basic residues</keyword>
<keyword id="KW-0204">Cytolysis</keyword>
<keyword id="KW-1015">Disulfide bond</keyword>
<keyword id="KW-0295">Fungicide</keyword>
<keyword id="KW-0354">Hemolysis</keyword>
<keyword id="KW-0964">Secreted</keyword>
<keyword id="KW-0732">Signal</keyword>